<gene>
    <name evidence="1" type="primary">ubiC</name>
    <name type="ordered locus">Csal_3251</name>
</gene>
<feature type="chain" id="PRO_0000255905" description="Probable chorismate pyruvate-lyase">
    <location>
        <begin position="1"/>
        <end position="183"/>
    </location>
</feature>
<feature type="binding site" evidence="1">
    <location>
        <position position="79"/>
    </location>
    <ligand>
        <name>substrate</name>
    </ligand>
</feature>
<feature type="binding site" evidence="1">
    <location>
        <position position="115"/>
    </location>
    <ligand>
        <name>substrate</name>
    </ligand>
</feature>
<feature type="binding site" evidence="1">
    <location>
        <position position="168"/>
    </location>
    <ligand>
        <name>substrate</name>
    </ligand>
</feature>
<comment type="function">
    <text evidence="1">Removes the pyruvyl group from chorismate, with concomitant aromatization of the ring, to provide 4-hydroxybenzoate (4HB) for the ubiquinone pathway.</text>
</comment>
<comment type="catalytic activity">
    <reaction evidence="1">
        <text>chorismate = 4-hydroxybenzoate + pyruvate</text>
        <dbReference type="Rhea" id="RHEA:16505"/>
        <dbReference type="ChEBI" id="CHEBI:15361"/>
        <dbReference type="ChEBI" id="CHEBI:17879"/>
        <dbReference type="ChEBI" id="CHEBI:29748"/>
        <dbReference type="EC" id="4.1.3.40"/>
    </reaction>
</comment>
<comment type="pathway">
    <text evidence="1">Cofactor biosynthesis; ubiquinone biosynthesis.</text>
</comment>
<comment type="subcellular location">
    <subcellularLocation>
        <location evidence="1">Cytoplasm</location>
    </subcellularLocation>
</comment>
<comment type="similarity">
    <text evidence="1">Belongs to the UbiC family.</text>
</comment>
<accession>Q1QSG3</accession>
<protein>
    <recommendedName>
        <fullName evidence="1">Probable chorismate pyruvate-lyase</fullName>
        <shortName evidence="1">CL</shortName>
        <shortName evidence="1">CPL</shortName>
        <ecNumber evidence="1">4.1.3.40</ecNumber>
    </recommendedName>
</protein>
<proteinExistence type="inferred from homology"/>
<name>UBIC_CHRSD</name>
<organism>
    <name type="scientific">Chromohalobacter salexigens (strain ATCC BAA-138 / DSM 3043 / CIP 106854 / NCIMB 13768 / 1H11)</name>
    <dbReference type="NCBI Taxonomy" id="290398"/>
    <lineage>
        <taxon>Bacteria</taxon>
        <taxon>Pseudomonadati</taxon>
        <taxon>Pseudomonadota</taxon>
        <taxon>Gammaproteobacteria</taxon>
        <taxon>Oceanospirillales</taxon>
        <taxon>Halomonadaceae</taxon>
        <taxon>Chromohalobacter</taxon>
    </lineage>
</organism>
<reference key="1">
    <citation type="journal article" date="2011" name="Stand. Genomic Sci.">
        <title>Complete genome sequence of the halophilic and highly halotolerant Chromohalobacter salexigens type strain (1H11(T)).</title>
        <authorList>
            <person name="Copeland A."/>
            <person name="O'Connor K."/>
            <person name="Lucas S."/>
            <person name="Lapidus A."/>
            <person name="Berry K.W."/>
            <person name="Detter J.C."/>
            <person name="Del Rio T.G."/>
            <person name="Hammon N."/>
            <person name="Dalin E."/>
            <person name="Tice H."/>
            <person name="Pitluck S."/>
            <person name="Bruce D."/>
            <person name="Goodwin L."/>
            <person name="Han C."/>
            <person name="Tapia R."/>
            <person name="Saunders E."/>
            <person name="Schmutz J."/>
            <person name="Brettin T."/>
            <person name="Larimer F."/>
            <person name="Land M."/>
            <person name="Hauser L."/>
            <person name="Vargas C."/>
            <person name="Nieto J.J."/>
            <person name="Kyrpides N.C."/>
            <person name="Ivanova N."/>
            <person name="Goker M."/>
            <person name="Klenk H.P."/>
            <person name="Csonka L.N."/>
            <person name="Woyke T."/>
        </authorList>
    </citation>
    <scope>NUCLEOTIDE SEQUENCE [LARGE SCALE GENOMIC DNA]</scope>
    <source>
        <strain>ATCC BAA-138 / DSM 3043 / CIP 106854 / NCIMB 13768 / 1H11</strain>
    </source>
</reference>
<sequence length="183" mass="20588">MSPDRFPGWPHWLPIAAQRPRMSPDWWPWVASRDSLTARLRIASPRPFSVRLLTQGVTRPRLDEAQALGLPHRTHVWHREVLLRLGNASWVAARSVAPLEGLSGARLCTLGERSLGSWLFRQPNLERGPIEAIRAPAMTGLDAWRGDAGPWGRRSLLRVGRTRILVQEFFLAAMAADLSLPSR</sequence>
<keyword id="KW-0963">Cytoplasm</keyword>
<keyword id="KW-0456">Lyase</keyword>
<keyword id="KW-0670">Pyruvate</keyword>
<keyword id="KW-1185">Reference proteome</keyword>
<keyword id="KW-0831">Ubiquinone biosynthesis</keyword>
<dbReference type="EC" id="4.1.3.40" evidence="1"/>
<dbReference type="EMBL" id="CP000285">
    <property type="protein sequence ID" value="ABE60595.1"/>
    <property type="molecule type" value="Genomic_DNA"/>
</dbReference>
<dbReference type="RefSeq" id="WP_011508541.1">
    <property type="nucleotide sequence ID" value="NC_007963.1"/>
</dbReference>
<dbReference type="SMR" id="Q1QSG3"/>
<dbReference type="STRING" id="290398.Csal_3251"/>
<dbReference type="GeneID" id="95335943"/>
<dbReference type="KEGG" id="csa:Csal_3251"/>
<dbReference type="eggNOG" id="COG3161">
    <property type="taxonomic scope" value="Bacteria"/>
</dbReference>
<dbReference type="HOGENOM" id="CLU_096824_2_1_6"/>
<dbReference type="OrthoDB" id="9789493at2"/>
<dbReference type="UniPathway" id="UPA00232"/>
<dbReference type="Proteomes" id="UP000000239">
    <property type="component" value="Chromosome"/>
</dbReference>
<dbReference type="GO" id="GO:0005829">
    <property type="term" value="C:cytosol"/>
    <property type="evidence" value="ECO:0007669"/>
    <property type="project" value="TreeGrafter"/>
</dbReference>
<dbReference type="GO" id="GO:0008813">
    <property type="term" value="F:chorismate lyase activity"/>
    <property type="evidence" value="ECO:0007669"/>
    <property type="project" value="UniProtKB-UniRule"/>
</dbReference>
<dbReference type="GO" id="GO:0042866">
    <property type="term" value="P:pyruvate biosynthetic process"/>
    <property type="evidence" value="ECO:0007669"/>
    <property type="project" value="UniProtKB-UniRule"/>
</dbReference>
<dbReference type="GO" id="GO:0006744">
    <property type="term" value="P:ubiquinone biosynthetic process"/>
    <property type="evidence" value="ECO:0007669"/>
    <property type="project" value="UniProtKB-UniRule"/>
</dbReference>
<dbReference type="Gene3D" id="3.40.1410.10">
    <property type="entry name" value="Chorismate lyase-like"/>
    <property type="match status" value="1"/>
</dbReference>
<dbReference type="HAMAP" id="MF_01632">
    <property type="entry name" value="UbiC"/>
    <property type="match status" value="1"/>
</dbReference>
<dbReference type="InterPro" id="IPR007440">
    <property type="entry name" value="Chorismate--pyruvate_lyase"/>
</dbReference>
<dbReference type="InterPro" id="IPR028978">
    <property type="entry name" value="Chorismate_lyase_/UTRA_dom_sf"/>
</dbReference>
<dbReference type="PANTHER" id="PTHR38683">
    <property type="entry name" value="CHORISMATE PYRUVATE-LYASE"/>
    <property type="match status" value="1"/>
</dbReference>
<dbReference type="PANTHER" id="PTHR38683:SF1">
    <property type="entry name" value="CHORISMATE PYRUVATE-LYASE"/>
    <property type="match status" value="1"/>
</dbReference>
<dbReference type="Pfam" id="PF04345">
    <property type="entry name" value="Chor_lyase"/>
    <property type="match status" value="1"/>
</dbReference>
<dbReference type="SUPFAM" id="SSF64288">
    <property type="entry name" value="Chorismate lyase-like"/>
    <property type="match status" value="1"/>
</dbReference>
<evidence type="ECO:0000255" key="1">
    <source>
        <dbReference type="HAMAP-Rule" id="MF_01632"/>
    </source>
</evidence>